<sequence length="570" mass="65205">MSFDGMFTYGMTHELNEKIMGGRITKIHQPYKHDVIFHIRAKGKNQKLLLSAHPSYSRVHITAQAYENPSEPPMFCMLLRKHIEGGFIEKIEQAGLDRIMIFHIKSRNEIGDETVRKLYVEIMGRHSNIILTDAAENVIIDGLKHLSPSMNSYRTVLPGQDYKLPPAQDKISPLEASEDDILRHLSFQEGRLDKQIVDHFSGVSPLFAKEAVHRAGLANKVTLPKALLALFAEVKEHRFIPNITTVNGKEYFYLLELTHLKGEARRFDSLSELLDRFYFGKAERDRVKQQAQDLERFVVNERKKNANKIKKLEKTLEYSENAKEFQLYGELLTANLYMLKKGDKQAEVINYYDEESPTITIPLNPNKTPSENAQAYFTKYQKAKNSVAVVEEQIRLAQEEIEYFDQLIQQLSSASPRDISEIREELVEGKYLRPKQQKGQKKQKPHNPVLETYESTSGLTILVGKNNRQNEYLTTRVAARDDIWLHTKDIPGSHVVIRSSEPDEQTIMEAATIAAYFSKAKDSSSVPVDYTKIRHVKKPNGAKPGFVTYDSQHTVFVTPDADTVIKLKKS</sequence>
<reference key="1">
    <citation type="submission" date="1997-10" db="EMBL/GenBank/DDBJ databases">
        <title>Cloning and sequencing 8 Kbp of DNA from Bacillus subtilis downstream of the pyr operon.</title>
        <authorList>
            <person name="Foulger D."/>
            <person name="Errington J."/>
        </authorList>
    </citation>
    <scope>NUCLEOTIDE SEQUENCE [GENOMIC DNA]</scope>
    <source>
        <strain>168</strain>
    </source>
</reference>
<reference key="2">
    <citation type="journal article" date="1997" name="Nature">
        <title>The complete genome sequence of the Gram-positive bacterium Bacillus subtilis.</title>
        <authorList>
            <person name="Kunst F."/>
            <person name="Ogasawara N."/>
            <person name="Moszer I."/>
            <person name="Albertini A.M."/>
            <person name="Alloni G."/>
            <person name="Azevedo V."/>
            <person name="Bertero M.G."/>
            <person name="Bessieres P."/>
            <person name="Bolotin A."/>
            <person name="Borchert S."/>
            <person name="Borriss R."/>
            <person name="Boursier L."/>
            <person name="Brans A."/>
            <person name="Braun M."/>
            <person name="Brignell S.C."/>
            <person name="Bron S."/>
            <person name="Brouillet S."/>
            <person name="Bruschi C.V."/>
            <person name="Caldwell B."/>
            <person name="Capuano V."/>
            <person name="Carter N.M."/>
            <person name="Choi S.-K."/>
            <person name="Codani J.-J."/>
            <person name="Connerton I.F."/>
            <person name="Cummings N.J."/>
            <person name="Daniel R.A."/>
            <person name="Denizot F."/>
            <person name="Devine K.M."/>
            <person name="Duesterhoeft A."/>
            <person name="Ehrlich S.D."/>
            <person name="Emmerson P.T."/>
            <person name="Entian K.-D."/>
            <person name="Errington J."/>
            <person name="Fabret C."/>
            <person name="Ferrari E."/>
            <person name="Foulger D."/>
            <person name="Fritz C."/>
            <person name="Fujita M."/>
            <person name="Fujita Y."/>
            <person name="Fuma S."/>
            <person name="Galizzi A."/>
            <person name="Galleron N."/>
            <person name="Ghim S.-Y."/>
            <person name="Glaser P."/>
            <person name="Goffeau A."/>
            <person name="Golightly E.J."/>
            <person name="Grandi G."/>
            <person name="Guiseppi G."/>
            <person name="Guy B.J."/>
            <person name="Haga K."/>
            <person name="Haiech J."/>
            <person name="Harwood C.R."/>
            <person name="Henaut A."/>
            <person name="Hilbert H."/>
            <person name="Holsappel S."/>
            <person name="Hosono S."/>
            <person name="Hullo M.-F."/>
            <person name="Itaya M."/>
            <person name="Jones L.-M."/>
            <person name="Joris B."/>
            <person name="Karamata D."/>
            <person name="Kasahara Y."/>
            <person name="Klaerr-Blanchard M."/>
            <person name="Klein C."/>
            <person name="Kobayashi Y."/>
            <person name="Koetter P."/>
            <person name="Koningstein G."/>
            <person name="Krogh S."/>
            <person name="Kumano M."/>
            <person name="Kurita K."/>
            <person name="Lapidus A."/>
            <person name="Lardinois S."/>
            <person name="Lauber J."/>
            <person name="Lazarevic V."/>
            <person name="Lee S.-M."/>
            <person name="Levine A."/>
            <person name="Liu H."/>
            <person name="Masuda S."/>
            <person name="Mauel C."/>
            <person name="Medigue C."/>
            <person name="Medina N."/>
            <person name="Mellado R.P."/>
            <person name="Mizuno M."/>
            <person name="Moestl D."/>
            <person name="Nakai S."/>
            <person name="Noback M."/>
            <person name="Noone D."/>
            <person name="O'Reilly M."/>
            <person name="Ogawa K."/>
            <person name="Ogiwara A."/>
            <person name="Oudega B."/>
            <person name="Park S.-H."/>
            <person name="Parro V."/>
            <person name="Pohl T.M."/>
            <person name="Portetelle D."/>
            <person name="Porwollik S."/>
            <person name="Prescott A.M."/>
            <person name="Presecan E."/>
            <person name="Pujic P."/>
            <person name="Purnelle B."/>
            <person name="Rapoport G."/>
            <person name="Rey M."/>
            <person name="Reynolds S."/>
            <person name="Rieger M."/>
            <person name="Rivolta C."/>
            <person name="Rocha E."/>
            <person name="Roche B."/>
            <person name="Rose M."/>
            <person name="Sadaie Y."/>
            <person name="Sato T."/>
            <person name="Scanlan E."/>
            <person name="Schleich S."/>
            <person name="Schroeter R."/>
            <person name="Scoffone F."/>
            <person name="Sekiguchi J."/>
            <person name="Sekowska A."/>
            <person name="Seror S.J."/>
            <person name="Serror P."/>
            <person name="Shin B.-S."/>
            <person name="Soldo B."/>
            <person name="Sorokin A."/>
            <person name="Tacconi E."/>
            <person name="Takagi T."/>
            <person name="Takahashi H."/>
            <person name="Takemaru K."/>
            <person name="Takeuchi M."/>
            <person name="Tamakoshi A."/>
            <person name="Tanaka T."/>
            <person name="Terpstra P."/>
            <person name="Tognoni A."/>
            <person name="Tosato V."/>
            <person name="Uchiyama S."/>
            <person name="Vandenbol M."/>
            <person name="Vannier F."/>
            <person name="Vassarotti A."/>
            <person name="Viari A."/>
            <person name="Wambutt R."/>
            <person name="Wedler E."/>
            <person name="Wedler H."/>
            <person name="Weitzenegger T."/>
            <person name="Winters P."/>
            <person name="Wipat A."/>
            <person name="Yamamoto H."/>
            <person name="Yamane K."/>
            <person name="Yasumoto K."/>
            <person name="Yata K."/>
            <person name="Yoshida K."/>
            <person name="Yoshikawa H.-F."/>
            <person name="Zumstein E."/>
            <person name="Yoshikawa H."/>
            <person name="Danchin A."/>
        </authorList>
    </citation>
    <scope>NUCLEOTIDE SEQUENCE [LARGE SCALE GENOMIC DNA]</scope>
    <source>
        <strain>168</strain>
    </source>
</reference>
<reference key="3">
    <citation type="journal article" date="1998" name="Microbiology">
        <title>A 28 kbp segment from the spoVM region of the Bacillus subtilis 168 genome.</title>
        <authorList>
            <person name="Foulger D."/>
            <person name="Errington J."/>
        </authorList>
    </citation>
    <scope>NUCLEOTIDE SEQUENCE [GENOMIC DNA] OF 1-198</scope>
    <source>
        <strain>168</strain>
    </source>
</reference>
<reference key="4">
    <citation type="journal article" date="2007" name="Appl. Environ. Microbiol.">
        <title>Production and secretion stress caused by overexpression of heterologous alpha-amylase leads to inhibition of sporulation and a prolonged motile phase in Bacillus subtilis.</title>
        <authorList>
            <person name="Lulko A.T."/>
            <person name="Veening J.-W."/>
            <person name="Buist G."/>
            <person name="Smits W.K."/>
            <person name="Blom E.J."/>
            <person name="Beekman A.C."/>
            <person name="Bron S."/>
            <person name="Kuipers O.P."/>
        </authorList>
    </citation>
    <scope>DEVELOPMENTAL STAGE</scope>
    <scope>INDUCTION</scope>
    <source>
        <strain>168</strain>
    </source>
</reference>
<reference key="5">
    <citation type="journal article" date="2019" name="Cell">
        <title>Alanine Tails Signal Proteolysis in Bacterial Ribosome-Associated Quality Control.</title>
        <authorList>
            <person name="Lytvynenko I."/>
            <person name="Paternoga H."/>
            <person name="Thrun A."/>
            <person name="Balke A."/>
            <person name="Mueller T.A."/>
            <person name="Chiang C.H."/>
            <person name="Nagler K."/>
            <person name="Tsaprailis G."/>
            <person name="Anders S."/>
            <person name="Bischofs I."/>
            <person name="Maupin-Furlow J.A."/>
            <person name="Spahn C.M.T."/>
            <person name="Joazeiro C.A.P."/>
        </authorList>
    </citation>
    <scope>SEQUENCE REVISION TO START SITE</scope>
    <scope>FUNCTION</scope>
    <scope>SUBUNIT</scope>
    <scope>DISRUPTION PHENOTYPE</scope>
    <scope>MUTAGENESIS OF 97-ASP-ARG-98; ASP-97 AND 121-GLU--MET-123</scope>
    <source>
        <strain>168 / 1A700</strain>
    </source>
</reference>
<reference key="6">
    <citation type="journal article" date="2022" name="Nature">
        <title>Bacterial ribosome collision sensing by a MutS DNA repair ATPase paralogue.</title>
        <authorList>
            <person name="Cerullo F."/>
            <person name="Filbeck S."/>
            <person name="Patil P.R."/>
            <person name="Hung H.C."/>
            <person name="Xu H."/>
            <person name="Vornberger J."/>
            <person name="Hofer F.W."/>
            <person name="Schmitt J."/>
            <person name="Kramer G."/>
            <person name="Bukau B."/>
            <person name="Hofmann K."/>
            <person name="Pfeffer S."/>
            <person name="Joazeiro C.A.P."/>
        </authorList>
    </citation>
    <scope>FUNCTION</scope>
    <scope>DISRUPTION PHENOTYPE</scope>
    <source>
        <strain>168</strain>
    </source>
</reference>
<reference key="7">
    <citation type="journal article" date="2024" name="EMBO J.">
        <title>B. subtilis MutS2 splits stalled ribosomes into subunits without mRNA cleavage.</title>
        <authorList>
            <person name="Park E.N."/>
            <person name="Mackens-Kiani T."/>
            <person name="Berhane R."/>
            <person name="Esser H."/>
            <person name="Erdenebat C."/>
            <person name="Burroughs A.M."/>
            <person name="Berninghausen O."/>
            <person name="Aravind L."/>
            <person name="Beckmann R."/>
            <person name="Green R."/>
            <person name="Buskirk A.R."/>
        </authorList>
    </citation>
    <scope>FUNCTION</scope>
    <scope>DISRUPTION PHENOTYPE</scope>
    <source>
        <strain>168</strain>
    </source>
</reference>
<reference evidence="13 14" key="8">
    <citation type="journal article" date="2021" name="Mol. Cell">
        <title>Mimicry of Canonical Translation Elongation Underlies Alanine Tail Synthesis in RQC.</title>
        <authorList>
            <person name="Filbeck S."/>
            <person name="Cerullo F."/>
            <person name="Paternoga H."/>
            <person name="Tsaprailis G."/>
            <person name="Joazeiro C.A.P."/>
            <person name="Pfeffer S."/>
        </authorList>
    </citation>
    <scope>STRUCTURE BY ELECTRON MICROSCOPY (2.99 ANGSTROMS) IN COMPLEX WITH 50S RIBOSOMAL SUBUNIT</scope>
    <scope>SUBUNIT</scope>
    <scope>INTERACTION WITH UL11</scope>
    <scope>DOMAIN</scope>
    <scope>COILED COIL</scope>
    <scope>DISRUPTION PHENOTYPE</scope>
    <scope>RRNA-BINDING</scope>
    <scope>TRNA-BINDING</scope>
    <source>
        <strain>168</strain>
    </source>
</reference>
<reference evidence="15 16 17" key="9">
    <citation type="journal article" date="2021" name="Mol. Cell">
        <title>Structural Basis for Bacterial Ribosome-Associated Quality Control by RqcH and RqcP.</title>
        <authorList>
            <person name="Crowe-McAuliffe C."/>
            <person name="Takada H."/>
            <person name="Murina V."/>
            <person name="Polte C."/>
            <person name="Kasvandik S."/>
            <person name="Tenson T."/>
            <person name="Ignatova Z."/>
            <person name="Atkinson G.C."/>
            <person name="Wilson D.N."/>
            <person name="Hauryliuk V."/>
        </authorList>
    </citation>
    <scope>STRUCTURE BY ELECTRON MICROSCOPY (2.90 ANGSTROMS) IN COMPLEX WITH 50S RIBOSOMAL SUBUNIT</scope>
    <scope>FUNCTION</scope>
    <scope>SUBUNIT</scope>
    <scope>INTERACTION WITH UL11</scope>
    <scope>DOMAIN</scope>
    <scope>COILED COIL</scope>
    <scope>RRNA-BINDING</scope>
    <scope>TRNA-BINDING</scope>
    <scope>MUTAGENESIS OF 97-ASP-ARG-98; 121-GLU--MET-123 AND 482-ASP--HIS-486</scope>
    <source>
        <strain>168</strain>
    </source>
</reference>
<reference evidence="18" key="10">
    <citation type="journal article" date="2021" name="Nucleic Acids Res.">
        <title>RqcH and RqcP catalyze processive poly-alanine synthesis in a reconstituted ribosome-associated quality control system.</title>
        <authorList>
            <person name="Takada H."/>
            <person name="Crowe-McAuliffe C."/>
            <person name="Polte C."/>
            <person name="Sidorova Z.Y."/>
            <person name="Murina V."/>
            <person name="Atkinson G.C."/>
            <person name="Konevega A.L."/>
            <person name="Ignatova Z."/>
            <person name="Wilson D.N."/>
            <person name="Hauryliuk V."/>
        </authorList>
    </citation>
    <scope>STRUCTURE BY ELECTRON MICROSCOPY (3.20 ANGSTROMS) IN COMPLEX WITH 50S RIBOSOMAL SUBUNIT</scope>
    <scope>FUNCTION</scope>
    <scope>INTERACTION WITH UL11</scope>
    <scope>COILED COIL</scope>
    <scope>DOMAIN</scope>
    <scope>RRNA-BINDING</scope>
    <scope>TRNA-BINDING</scope>
    <scope>MUTAGENESIS OF 97-ASP-ARG-98</scope>
    <source>
        <strain>168</strain>
    </source>
</reference>
<reference evidence="19" key="11">
    <citation type="journal article" date="2024" name="Nucleic Acids Res.">
        <title>A role for the S4-domain containing protein YlmH in ribosome-associated quality control in Bacillus subtilis.</title>
        <authorList>
            <person name="Takada H."/>
            <person name="Paternoga H."/>
            <person name="Fujiwara K."/>
            <person name="Nakamoto J.A."/>
            <person name="Park E.N."/>
            <person name="Dimitrova-Paternoga L."/>
            <person name="Beckert B."/>
            <person name="Saarma M."/>
            <person name="Tenson T."/>
            <person name="Buskirk A.R."/>
            <person name="Atkinson G.C."/>
            <person name="Chiba S."/>
            <person name="Wilson D.N."/>
            <person name="Hauryliuk V."/>
        </authorList>
    </citation>
    <scope>STRUCTURE BY ELECTRON MICROSCOPY (3.40 ANGSTROMS) IN COMPLEX WITH 50S RIBOSOMAL SUBUNIT</scope>
</reference>
<organism>
    <name type="scientific">Bacillus subtilis (strain 168)</name>
    <dbReference type="NCBI Taxonomy" id="224308"/>
    <lineage>
        <taxon>Bacteria</taxon>
        <taxon>Bacillati</taxon>
        <taxon>Bacillota</taxon>
        <taxon>Bacilli</taxon>
        <taxon>Bacillales</taxon>
        <taxon>Bacillaceae</taxon>
        <taxon>Bacillus</taxon>
    </lineage>
</organism>
<proteinExistence type="evidence at protein level"/>
<comment type="function">
    <text evidence="1 3 4 5 6 7 8">Key component of the ribosome quality control system (RQC), a ribosome-associated complex that mediates the extraction of incompletely synthesized nascent chains from stalled ribosomes and their subsequent degradation (PubMed:31155236). RqcH recruits Ala-charged tRNA, and with RqcP directs the elongation of stalled nascent chains on 50S ribosomal subunits, leading to non-templated C-terminal alanine extensions (Ala tail) (PubMed:31155236, PubMed:35264791, PubMed:38177497). The Ala tail promotes nascent chain degradation (PubMed:31155236). RqcH, RqcP and charged tRNA(Ala) are necessary and sufficient to add an Ala tail to a model stalled nascent peptide; does not add Val (PubMed:34255840). Binds the P-site tRNA in 50S ribosomal subunit, unwinds the anticodon stem and interacts with the splayed anticodon (PubMed:33259811, PubMed:33259810, PubMed:34255840). Selectively binds tRNA(Ala) isoacceptors, even in the absence of the 50S ribosomal subunit (PubMed:31155236, PubMed:33259810, PubMed:34255840). Adds between 1 and at least 8 Ala residues to the nascent chain; detection of the Ala tail requires either deletion of clpP or its inhibition (PubMed:31155236). Binds to 50S ribosomal subunits, at least 30% of which contain a P-site tRNA and thus are obstructed (PubMed:31155236, PubMed:33259811).</text>
</comment>
<comment type="subunit">
    <text evidence="1 3 4 5 6 9">Associates with isolated or stalled 50S ribosomal subunits (PubMed:31155236, PubMed:33259811, PubMed:33259810, PubMed:34255840). Binds to RqcP (PubMed:33259811, PubMed:33259810, PubMed:34255840). Interacts with ribosomal protein uL11 (PubMed:33259811, PubMed:33259810, PubMed:34255840). Displaced from the 50S subunit by thiostrepton (PubMed:33259810, PubMed:34255840). In crystallized 50S subunits RqcH is variously associated with A/P-site tRNA, P-site tRNA and RqcP, an E-site tRNA or A- and P-site tRNAs and RqcP2(YlmH) (PubMed:33259811, PubMed:33259810, PubMed:34255840, PubMed:38811035).</text>
</comment>
<comment type="developmental stage">
    <text evidence="2">Highly expressed during stationary phase (PubMed:17586671).</text>
</comment>
<comment type="induction">
    <text evidence="2">Up-regulated under secretion stress conditions, possibly in a CssR/CssS-dependent manner (PubMed:17586671).</text>
</comment>
<comment type="domain">
    <text evidence="4 5 6">Has 4 domains; N-terminal NFACT-N, central helix-hairpin-helix (HhH), 2 coiled coil domains with a beta-hairpin in the middle (CC-M), and C-terminal NFACT-R (PubMed:33259811, PubMed:33259810, PubMed:34255840). The NFACT-N domain contacts 23S rRNA, the A/P-site tRNA anticodon and recognizes tRNA(Ala), while the M beta hairpin binds protein uL11 near the base of the bL12 stalk (PubMed:33259810, PubMed:34255840).</text>
</comment>
<comment type="disruption phenotype">
    <text evidence="3 5 7 8">Not essential in rich media; synthetic growth defects are seen in double rqcH-ssrA mutants, further exacerbated by translational inhibitors spectinomycin and erythromycin or at elevated temperatures (PubMed:31155236, PubMed:33259811). Decreased accumulation of a stalled reporter protein (PubMed:31155236). Double rqcH-rqcP deletion strains grow normally in rich media (PubMed:33259811). Triple rqcH-clpP-ssrA mutants cannot be generated (PubMed:31155236). No change in sensitivity to erythromycin; double mutSB-rqcH and triple mutSB-rqcH-ssrA deletion strains are hypersensitive to erythromycin (PubMed:35264791). Loss of Ala tailing (PubMed:38177497).</text>
</comment>
<comment type="miscellaneous">
    <text evidence="3">Activity of this protein is best tested in a clpP or ssrA deletion mutant; ssrA (tmRNA) encodes the SsrA tag added to nascent proteins in stalled ribosomes by trans-translation, which targets the nascent protein for degradation.</text>
</comment>
<comment type="similarity">
    <text evidence="1">Belongs to the NEMF family.</text>
</comment>
<comment type="sequence caution" evidence="12">
    <conflict type="erroneous initiation">
        <sequence resource="EMBL-CDS" id="CAA04416"/>
    </conflict>
    <text>Extended N-terminus.</text>
</comment>
<comment type="sequence caution" evidence="12">
    <conflict type="erroneous initiation">
        <sequence resource="EMBL-CDS" id="CAA74268"/>
    </conflict>
    <text>Extended N-terminus.</text>
</comment>
<comment type="sequence caution" evidence="12">
    <conflict type="erroneous initiation">
        <sequence resource="EMBL-CDS" id="CAB13438"/>
    </conflict>
    <text>Extended N-terminus.</text>
</comment>
<feature type="chain" id="PRO_0000383595" description="Rqc2 homolog RqcH">
    <location>
        <begin position="1"/>
        <end position="570"/>
    </location>
</feature>
<feature type="region of interest" description="NFACT-N domain" evidence="4 5 6">
    <location>
        <begin position="1"/>
        <end position="173"/>
    </location>
</feature>
<feature type="region of interest" description="HhH domain" evidence="4 5 6">
    <location>
        <begin position="179"/>
        <end position="281"/>
    </location>
</feature>
<feature type="region of interest" description="Coiled-coil-M (CCM)" evidence="4 5 6">
    <location>
        <begin position="282"/>
        <end position="434"/>
    </location>
</feature>
<feature type="region of interest" description="NFACT-R" evidence="4 5 6">
    <location>
        <begin position="446"/>
        <end position="570"/>
    </location>
</feature>
<feature type="coiled-coil region" evidence="4 5 6 13 14 15 16 17">
    <location>
        <begin position="279"/>
        <end position="336"/>
    </location>
</feature>
<feature type="coiled-coil region" evidence="4 5 6 13 14 15 16 17">
    <location>
        <begin position="368"/>
        <end position="430"/>
    </location>
</feature>
<feature type="mutagenesis site" description="Still interacts with 50S ribosomal subunit. Loss of preferential binding of tRNA(Ala). Decreased distortion of the P-site tRNA, loss of Ala tailing in vitro." evidence="4 6">
    <original>DR</original>
    <variation>AA</variation>
    <location>
        <begin position="97"/>
        <end position="98"/>
    </location>
</feature>
<feature type="mutagenesis site" description="No longer binds tRNA(Ala) anticodon (UGC), loss of Ala tailing ability, decreased accumulation of a stalled reporter protein." evidence="3">
    <original>DR</original>
    <variation>YA</variation>
    <location>
        <begin position="97"/>
        <end position="98"/>
    </location>
</feature>
<feature type="mutagenesis site" description="No longer binds tRNA(Ala) anticodon (UGC), has minor Ala tailing ability, decreased accumulation of a stalled reporter protein." evidence="3">
    <original>D</original>
    <variation>Y</variation>
    <location>
        <position position="97"/>
    </location>
</feature>
<feature type="mutagenesis site" description="No longer binds tRNA(Ala) anticodon (UGC), decreased accumulation of a stalled reporter protein. Still interacts with 50S ribosomal subunit." evidence="3 4">
    <original>EIM</original>
    <variation>AAA</variation>
    <location>
        <begin position="121"/>
        <end position="123"/>
    </location>
</feature>
<feature type="mutagenesis site" description="No longer interacts with 50S ribosomal subunit." evidence="4">
    <original>DIWLH</original>
    <variation>AIALA</variation>
    <location>
        <begin position="482"/>
        <end position="486"/>
    </location>
</feature>
<feature type="helix" evidence="21">
    <location>
        <begin position="5"/>
        <end position="16"/>
    </location>
</feature>
<feature type="strand" evidence="21">
    <location>
        <begin position="22"/>
        <end position="31"/>
    </location>
</feature>
<feature type="strand" evidence="21">
    <location>
        <begin position="34"/>
        <end position="41"/>
    </location>
</feature>
<feature type="strand" evidence="21">
    <location>
        <begin position="44"/>
        <end position="51"/>
    </location>
</feature>
<feature type="turn" evidence="21">
    <location>
        <begin position="54"/>
        <end position="56"/>
    </location>
</feature>
<feature type="strand" evidence="21">
    <location>
        <begin position="58"/>
        <end position="60"/>
    </location>
</feature>
<feature type="helix" evidence="21">
    <location>
        <begin position="74"/>
        <end position="83"/>
    </location>
</feature>
<feature type="strand" evidence="21">
    <location>
        <begin position="87"/>
        <end position="92"/>
    </location>
</feature>
<feature type="strand" evidence="21">
    <location>
        <begin position="97"/>
        <end position="107"/>
    </location>
</feature>
<feature type="strand" evidence="23">
    <location>
        <begin position="109"/>
        <end position="111"/>
    </location>
</feature>
<feature type="strand" evidence="21">
    <location>
        <begin position="113"/>
        <end position="121"/>
    </location>
</feature>
<feature type="helix" evidence="20">
    <location>
        <begin position="124"/>
        <end position="126"/>
    </location>
</feature>
<feature type="strand" evidence="21">
    <location>
        <begin position="128"/>
        <end position="136"/>
    </location>
</feature>
<feature type="strand" evidence="21">
    <location>
        <begin position="138"/>
        <end position="144"/>
    </location>
</feature>
<feature type="helix" evidence="21">
    <location>
        <begin position="148"/>
        <end position="150"/>
    </location>
</feature>
<feature type="turn" evidence="23">
    <location>
        <begin position="173"/>
        <end position="175"/>
    </location>
</feature>
<feature type="helix" evidence="21">
    <location>
        <begin position="180"/>
        <end position="184"/>
    </location>
</feature>
<feature type="helix" evidence="21">
    <location>
        <begin position="187"/>
        <end position="189"/>
    </location>
</feature>
<feature type="helix" evidence="21">
    <location>
        <begin position="192"/>
        <end position="195"/>
    </location>
</feature>
<feature type="turn" evidence="21">
    <location>
        <begin position="196"/>
        <end position="199"/>
    </location>
</feature>
<feature type="strand" evidence="22">
    <location>
        <begin position="200"/>
        <end position="202"/>
    </location>
</feature>
<feature type="helix" evidence="21">
    <location>
        <begin position="205"/>
        <end position="212"/>
    </location>
</feature>
<feature type="helix" evidence="21">
    <location>
        <begin position="224"/>
        <end position="235"/>
    </location>
</feature>
<feature type="strand" evidence="21">
    <location>
        <begin position="242"/>
        <end position="248"/>
    </location>
</feature>
<feature type="strand" evidence="21">
    <location>
        <begin position="250"/>
        <end position="255"/>
    </location>
</feature>
<feature type="strand" evidence="21">
    <location>
        <begin position="259"/>
        <end position="261"/>
    </location>
</feature>
<feature type="strand" evidence="21">
    <location>
        <begin position="263"/>
        <end position="266"/>
    </location>
</feature>
<feature type="helix" evidence="21">
    <location>
        <begin position="270"/>
        <end position="316"/>
    </location>
</feature>
<feature type="helix" evidence="21">
    <location>
        <begin position="322"/>
        <end position="334"/>
    </location>
</feature>
<feature type="turn" evidence="21">
    <location>
        <begin position="335"/>
        <end position="337"/>
    </location>
</feature>
<feature type="strand" evidence="21">
    <location>
        <begin position="344"/>
        <end position="349"/>
    </location>
</feature>
<feature type="strand" evidence="20">
    <location>
        <begin position="352"/>
        <end position="355"/>
    </location>
</feature>
<feature type="strand" evidence="21">
    <location>
        <begin position="358"/>
        <end position="362"/>
    </location>
</feature>
<feature type="strand" evidence="22">
    <location>
        <begin position="365"/>
        <end position="367"/>
    </location>
</feature>
<feature type="helix" evidence="21">
    <location>
        <begin position="369"/>
        <end position="412"/>
    </location>
</feature>
<feature type="helix" evidence="21">
    <location>
        <begin position="416"/>
        <end position="428"/>
    </location>
</feature>
<feature type="strand" evidence="21">
    <location>
        <begin position="451"/>
        <end position="454"/>
    </location>
</feature>
<feature type="helix" evidence="21">
    <location>
        <begin position="456"/>
        <end position="458"/>
    </location>
</feature>
<feature type="strand" evidence="21">
    <location>
        <begin position="460"/>
        <end position="466"/>
    </location>
</feature>
<feature type="helix" evidence="21">
    <location>
        <begin position="467"/>
        <end position="476"/>
    </location>
</feature>
<feature type="strand" evidence="21">
    <location>
        <begin position="480"/>
        <end position="492"/>
    </location>
</feature>
<feature type="strand" evidence="21">
    <location>
        <begin position="494"/>
        <end position="497"/>
    </location>
</feature>
<feature type="strand" evidence="20">
    <location>
        <begin position="499"/>
        <end position="501"/>
    </location>
</feature>
<feature type="helix" evidence="21">
    <location>
        <begin position="504"/>
        <end position="516"/>
    </location>
</feature>
<feature type="strand" evidence="21">
    <location>
        <begin position="517"/>
        <end position="520"/>
    </location>
</feature>
<feature type="strand" evidence="21">
    <location>
        <begin position="526"/>
        <end position="532"/>
    </location>
</feature>
<feature type="helix" evidence="21">
    <location>
        <begin position="533"/>
        <end position="535"/>
    </location>
</feature>
<feature type="strand" evidence="20">
    <location>
        <begin position="540"/>
        <end position="542"/>
    </location>
</feature>
<feature type="strand" evidence="21">
    <location>
        <begin position="551"/>
        <end position="557"/>
    </location>
</feature>
<feature type="helix" evidence="21">
    <location>
        <begin position="562"/>
        <end position="564"/>
    </location>
</feature>
<accession>O34693</accession>
<accession>Q796I2</accession>
<accession>Q799L3</accession>
<gene>
    <name evidence="1 10" type="primary">rqcH</name>
    <name type="synonym">yloA</name>
    <name type="ordered locus">BSU15640</name>
</gene>
<evidence type="ECO:0000255" key="1">
    <source>
        <dbReference type="HAMAP-Rule" id="MF_00844"/>
    </source>
</evidence>
<evidence type="ECO:0000269" key="2">
    <source>
    </source>
</evidence>
<evidence type="ECO:0000269" key="3">
    <source>
    </source>
</evidence>
<evidence type="ECO:0000269" key="4">
    <source>
    </source>
</evidence>
<evidence type="ECO:0000269" key="5">
    <source>
    </source>
</evidence>
<evidence type="ECO:0000269" key="6">
    <source>
    </source>
</evidence>
<evidence type="ECO:0000269" key="7">
    <source>
    </source>
</evidence>
<evidence type="ECO:0000269" key="8">
    <source>
    </source>
</evidence>
<evidence type="ECO:0000269" key="9">
    <source>
    </source>
</evidence>
<evidence type="ECO:0000303" key="10">
    <source>
    </source>
</evidence>
<evidence type="ECO:0000305" key="11"/>
<evidence type="ECO:0000305" key="12">
    <source>
    </source>
</evidence>
<evidence type="ECO:0007744" key="13">
    <source>
        <dbReference type="PDB" id="7AQC"/>
    </source>
</evidence>
<evidence type="ECO:0007744" key="14">
    <source>
        <dbReference type="PDB" id="7AQD"/>
    </source>
</evidence>
<evidence type="ECO:0007744" key="15">
    <source>
        <dbReference type="PDB" id="7AS8"/>
    </source>
</evidence>
<evidence type="ECO:0007744" key="16">
    <source>
        <dbReference type="PDB" id="7AS9"/>
    </source>
</evidence>
<evidence type="ECO:0007744" key="17">
    <source>
        <dbReference type="PDB" id="7ASA"/>
    </source>
</evidence>
<evidence type="ECO:0007744" key="18">
    <source>
        <dbReference type="PDB" id="7OPE"/>
    </source>
</evidence>
<evidence type="ECO:0007744" key="19">
    <source>
        <dbReference type="PDB" id="8S1U"/>
    </source>
</evidence>
<evidence type="ECO:0007829" key="20">
    <source>
        <dbReference type="PDB" id="7AQC"/>
    </source>
</evidence>
<evidence type="ECO:0007829" key="21">
    <source>
        <dbReference type="PDB" id="7AS8"/>
    </source>
</evidence>
<evidence type="ECO:0007829" key="22">
    <source>
        <dbReference type="PDB" id="7ASA"/>
    </source>
</evidence>
<evidence type="ECO:0007829" key="23">
    <source>
        <dbReference type="PDB" id="8S1U"/>
    </source>
</evidence>
<dbReference type="EMBL" id="AJ000974">
    <property type="protein sequence ID" value="CAA04416.1"/>
    <property type="status" value="ALT_INIT"/>
    <property type="molecule type" value="Genomic_DNA"/>
</dbReference>
<dbReference type="EMBL" id="AL009126">
    <property type="protein sequence ID" value="CAB13438.1"/>
    <property type="status" value="ALT_INIT"/>
    <property type="molecule type" value="Genomic_DNA"/>
</dbReference>
<dbReference type="EMBL" id="Y13937">
    <property type="protein sequence ID" value="CAA74268.1"/>
    <property type="status" value="ALT_INIT"/>
    <property type="molecule type" value="Genomic_DNA"/>
</dbReference>
<dbReference type="PIR" id="G69877">
    <property type="entry name" value="G69877"/>
</dbReference>
<dbReference type="RefSeq" id="WP_003232089.1">
    <property type="nucleotide sequence ID" value="NZ_OZ025638.1"/>
</dbReference>
<dbReference type="RefSeq" id="WP_010886504.1">
    <property type="nucleotide sequence ID" value="NC_000964.3"/>
</dbReference>
<dbReference type="PDB" id="7AQC">
    <property type="method" value="EM"/>
    <property type="resolution" value="2.99 A"/>
    <property type="chains" value="R=1-570"/>
</dbReference>
<dbReference type="PDB" id="7AQD">
    <property type="method" value="EM"/>
    <property type="resolution" value="3.10 A"/>
    <property type="chains" value="R=1-570"/>
</dbReference>
<dbReference type="PDB" id="7AS8">
    <property type="method" value="EM"/>
    <property type="resolution" value="2.90 A"/>
    <property type="chains" value="0=1-570"/>
</dbReference>
<dbReference type="PDB" id="7AS9">
    <property type="method" value="EM"/>
    <property type="resolution" value="3.50 A"/>
    <property type="chains" value="0=1-570"/>
</dbReference>
<dbReference type="PDB" id="7ASA">
    <property type="method" value="EM"/>
    <property type="resolution" value="3.50 A"/>
    <property type="chains" value="0=1-570"/>
</dbReference>
<dbReference type="PDB" id="7OPE">
    <property type="method" value="EM"/>
    <property type="resolution" value="3.20 A"/>
    <property type="chains" value="0=1-570"/>
</dbReference>
<dbReference type="PDB" id="8S1U">
    <property type="method" value="EM"/>
    <property type="resolution" value="3.40 A"/>
    <property type="chains" value="H=1-570"/>
</dbReference>
<dbReference type="PDBsum" id="7AQC"/>
<dbReference type="PDBsum" id="7AQD"/>
<dbReference type="PDBsum" id="7AS8"/>
<dbReference type="PDBsum" id="7AS9"/>
<dbReference type="PDBsum" id="7ASA"/>
<dbReference type="PDBsum" id="7OPE"/>
<dbReference type="PDBsum" id="8S1U"/>
<dbReference type="EMDB" id="EMD-11862"/>
<dbReference type="EMDB" id="EMD-11864"/>
<dbReference type="EMDB" id="EMD-11889"/>
<dbReference type="EMDB" id="EMD-11890"/>
<dbReference type="EMDB" id="EMD-11891"/>
<dbReference type="EMDB" id="EMD-19641"/>
<dbReference type="SMR" id="O34693"/>
<dbReference type="FunCoup" id="O34693">
    <property type="interactions" value="297"/>
</dbReference>
<dbReference type="STRING" id="224308.BSU15640"/>
<dbReference type="PaxDb" id="224308-BSU15640"/>
<dbReference type="EnsemblBacteria" id="CAB13438">
    <property type="protein sequence ID" value="CAB13438"/>
    <property type="gene ID" value="BSU_15640"/>
</dbReference>
<dbReference type="GeneID" id="936878"/>
<dbReference type="KEGG" id="bsu:BSU15640"/>
<dbReference type="PATRIC" id="fig|224308.43.peg.1659"/>
<dbReference type="eggNOG" id="COG1293">
    <property type="taxonomic scope" value="Bacteria"/>
</dbReference>
<dbReference type="InParanoid" id="O34693"/>
<dbReference type="OrthoDB" id="9766163at2"/>
<dbReference type="PhylomeDB" id="O34693"/>
<dbReference type="BioCyc" id="BSUB:BSU15640-MONOMER"/>
<dbReference type="Proteomes" id="UP000001570">
    <property type="component" value="Chromosome"/>
</dbReference>
<dbReference type="GO" id="GO:1990112">
    <property type="term" value="C:RQC complex"/>
    <property type="evidence" value="ECO:0000314"/>
    <property type="project" value="UniProtKB"/>
</dbReference>
<dbReference type="GO" id="GO:0043023">
    <property type="term" value="F:ribosomal large subunit binding"/>
    <property type="evidence" value="ECO:0000314"/>
    <property type="project" value="UniProtKB"/>
</dbReference>
<dbReference type="GO" id="GO:0019843">
    <property type="term" value="F:rRNA binding"/>
    <property type="evidence" value="ECO:0007669"/>
    <property type="project" value="UniProtKB-UniRule"/>
</dbReference>
<dbReference type="GO" id="GO:0000049">
    <property type="term" value="F:tRNA binding"/>
    <property type="evidence" value="ECO:0000314"/>
    <property type="project" value="UniProtKB"/>
</dbReference>
<dbReference type="GO" id="GO:0072344">
    <property type="term" value="P:rescue of stalled ribosome"/>
    <property type="evidence" value="ECO:0000314"/>
    <property type="project" value="UniProtKB"/>
</dbReference>
<dbReference type="FunFam" id="2.30.310.10:FF:000004">
    <property type="entry name" value="Fibronectin-binding protein A"/>
    <property type="match status" value="1"/>
</dbReference>
<dbReference type="Gene3D" id="1.10.8.50">
    <property type="match status" value="1"/>
</dbReference>
<dbReference type="Gene3D" id="3.40.970.40">
    <property type="entry name" value="fibrinogen binding protein from staphylococcus aureus domain like"/>
    <property type="match status" value="1"/>
</dbReference>
<dbReference type="Gene3D" id="2.30.310.10">
    <property type="entry name" value="ibrinogen binding protein from staphylococcus aureus domain"/>
    <property type="match status" value="1"/>
</dbReference>
<dbReference type="HAMAP" id="MF_00844_B">
    <property type="entry name" value="RqcH_B"/>
    <property type="match status" value="1"/>
</dbReference>
<dbReference type="InterPro" id="IPR008532">
    <property type="entry name" value="NFACT_RNA-bd"/>
</dbReference>
<dbReference type="InterPro" id="IPR051608">
    <property type="entry name" value="RQC_Subunit_NEMF"/>
</dbReference>
<dbReference type="InterPro" id="IPR043682">
    <property type="entry name" value="RqcH_bacterial"/>
</dbReference>
<dbReference type="PANTHER" id="PTHR15239">
    <property type="entry name" value="NUCLEAR EXPORT MEDIATOR FACTOR NEMF"/>
    <property type="match status" value="1"/>
</dbReference>
<dbReference type="PANTHER" id="PTHR15239:SF6">
    <property type="entry name" value="RIBOSOME QUALITY CONTROL COMPLEX SUBUNIT NEMF"/>
    <property type="match status" value="1"/>
</dbReference>
<dbReference type="Pfam" id="PF05670">
    <property type="entry name" value="NFACT-R_1"/>
    <property type="match status" value="1"/>
</dbReference>
<dbReference type="Pfam" id="PF05833">
    <property type="entry name" value="NFACT_N"/>
    <property type="match status" value="1"/>
</dbReference>
<name>RQCH_BACSU</name>
<protein>
    <recommendedName>
        <fullName evidence="1 10">Rqc2 homolog RqcH</fullName>
        <shortName evidence="1 10">RqcH</shortName>
    </recommendedName>
    <alternativeName>
        <fullName evidence="11">Ribosome-associated protein quality control protein H</fullName>
    </alternativeName>
</protein>
<keyword id="KW-0002">3D-structure</keyword>
<keyword id="KW-0175">Coiled coil</keyword>
<keyword id="KW-0648">Protein biosynthesis</keyword>
<keyword id="KW-1185">Reference proteome</keyword>
<keyword id="KW-0694">RNA-binding</keyword>
<keyword id="KW-0699">rRNA-binding</keyword>
<keyword id="KW-0820">tRNA-binding</keyword>